<name>RSMG_GRABC</name>
<accession>Q0BW94</accession>
<sequence length="213" mass="23378">MFHVKQPLINCQIIRTLLPAGSGVSRETGEKLALYESLLTRWTRTVNLVSRNDVEHIRDRHILDSLQLLPLLEPLPGPLIDIGSGGGLPGLVLAIATGRETHLVEADQRKAAFLREAARATESNVTVHACRIEQCNIAPAPVLTARALAPLNVLLGYALRLLSKNGVALFMKGKTAEQELTEAATEWHMRVQLSPSRTHPEASILRIDEISRV</sequence>
<evidence type="ECO:0000255" key="1">
    <source>
        <dbReference type="HAMAP-Rule" id="MF_00074"/>
    </source>
</evidence>
<keyword id="KW-0963">Cytoplasm</keyword>
<keyword id="KW-0489">Methyltransferase</keyword>
<keyword id="KW-1185">Reference proteome</keyword>
<keyword id="KW-0698">rRNA processing</keyword>
<keyword id="KW-0949">S-adenosyl-L-methionine</keyword>
<keyword id="KW-0808">Transferase</keyword>
<gene>
    <name evidence="1" type="primary">rsmG</name>
    <name type="ordered locus">GbCGDNIH1_0010</name>
</gene>
<feature type="chain" id="PRO_0000335357" description="Ribosomal RNA small subunit methyltransferase G">
    <location>
        <begin position="1"/>
        <end position="213"/>
    </location>
</feature>
<feature type="binding site" evidence="1">
    <location>
        <position position="83"/>
    </location>
    <ligand>
        <name>S-adenosyl-L-methionine</name>
        <dbReference type="ChEBI" id="CHEBI:59789"/>
    </ligand>
</feature>
<feature type="binding site" evidence="1">
    <location>
        <position position="88"/>
    </location>
    <ligand>
        <name>S-adenosyl-L-methionine</name>
        <dbReference type="ChEBI" id="CHEBI:59789"/>
    </ligand>
</feature>
<feature type="binding site" evidence="1">
    <location>
        <begin position="132"/>
        <end position="133"/>
    </location>
    <ligand>
        <name>S-adenosyl-L-methionine</name>
        <dbReference type="ChEBI" id="CHEBI:59789"/>
    </ligand>
</feature>
<feature type="binding site" evidence="1">
    <location>
        <position position="146"/>
    </location>
    <ligand>
        <name>S-adenosyl-L-methionine</name>
        <dbReference type="ChEBI" id="CHEBI:59789"/>
    </ligand>
</feature>
<protein>
    <recommendedName>
        <fullName evidence="1">Ribosomal RNA small subunit methyltransferase G</fullName>
        <ecNumber evidence="1">2.1.1.170</ecNumber>
    </recommendedName>
    <alternativeName>
        <fullName evidence="1">16S rRNA 7-methylguanosine methyltransferase</fullName>
        <shortName evidence="1">16S rRNA m7G methyltransferase</shortName>
    </alternativeName>
</protein>
<comment type="function">
    <text evidence="1">Specifically methylates the N7 position of guanine in position 527 of 16S rRNA.</text>
</comment>
<comment type="catalytic activity">
    <reaction evidence="1">
        <text>guanosine(527) in 16S rRNA + S-adenosyl-L-methionine = N(7)-methylguanosine(527) in 16S rRNA + S-adenosyl-L-homocysteine</text>
        <dbReference type="Rhea" id="RHEA:42732"/>
        <dbReference type="Rhea" id="RHEA-COMP:10209"/>
        <dbReference type="Rhea" id="RHEA-COMP:10210"/>
        <dbReference type="ChEBI" id="CHEBI:57856"/>
        <dbReference type="ChEBI" id="CHEBI:59789"/>
        <dbReference type="ChEBI" id="CHEBI:74269"/>
        <dbReference type="ChEBI" id="CHEBI:74480"/>
        <dbReference type="EC" id="2.1.1.170"/>
    </reaction>
</comment>
<comment type="subcellular location">
    <subcellularLocation>
        <location evidence="1">Cytoplasm</location>
    </subcellularLocation>
</comment>
<comment type="similarity">
    <text evidence="1">Belongs to the methyltransferase superfamily. RNA methyltransferase RsmG family.</text>
</comment>
<organism>
    <name type="scientific">Granulibacter bethesdensis (strain ATCC BAA-1260 / CGDNIH1)</name>
    <dbReference type="NCBI Taxonomy" id="391165"/>
    <lineage>
        <taxon>Bacteria</taxon>
        <taxon>Pseudomonadati</taxon>
        <taxon>Pseudomonadota</taxon>
        <taxon>Alphaproteobacteria</taxon>
        <taxon>Acetobacterales</taxon>
        <taxon>Acetobacteraceae</taxon>
        <taxon>Granulibacter</taxon>
    </lineage>
</organism>
<proteinExistence type="inferred from homology"/>
<dbReference type="EC" id="2.1.1.170" evidence="1"/>
<dbReference type="EMBL" id="CP000394">
    <property type="protein sequence ID" value="ABI60908.1"/>
    <property type="molecule type" value="Genomic_DNA"/>
</dbReference>
<dbReference type="RefSeq" id="WP_011630718.1">
    <property type="nucleotide sequence ID" value="NC_008343.2"/>
</dbReference>
<dbReference type="SMR" id="Q0BW94"/>
<dbReference type="STRING" id="391165.GbCGDNIH1_0010"/>
<dbReference type="KEGG" id="gbe:GbCGDNIH1_0010"/>
<dbReference type="eggNOG" id="COG0357">
    <property type="taxonomic scope" value="Bacteria"/>
</dbReference>
<dbReference type="HOGENOM" id="CLU_065341_1_1_5"/>
<dbReference type="Proteomes" id="UP000001963">
    <property type="component" value="Chromosome"/>
</dbReference>
<dbReference type="GO" id="GO:0005829">
    <property type="term" value="C:cytosol"/>
    <property type="evidence" value="ECO:0007669"/>
    <property type="project" value="TreeGrafter"/>
</dbReference>
<dbReference type="GO" id="GO:0070043">
    <property type="term" value="F:rRNA (guanine-N7-)-methyltransferase activity"/>
    <property type="evidence" value="ECO:0007669"/>
    <property type="project" value="UniProtKB-UniRule"/>
</dbReference>
<dbReference type="CDD" id="cd02440">
    <property type="entry name" value="AdoMet_MTases"/>
    <property type="match status" value="1"/>
</dbReference>
<dbReference type="Gene3D" id="3.40.50.150">
    <property type="entry name" value="Vaccinia Virus protein VP39"/>
    <property type="match status" value="1"/>
</dbReference>
<dbReference type="HAMAP" id="MF_00074">
    <property type="entry name" value="16SrRNA_methyltr_G"/>
    <property type="match status" value="1"/>
</dbReference>
<dbReference type="InterPro" id="IPR003682">
    <property type="entry name" value="rRNA_ssu_MeTfrase_G"/>
</dbReference>
<dbReference type="InterPro" id="IPR029063">
    <property type="entry name" value="SAM-dependent_MTases_sf"/>
</dbReference>
<dbReference type="NCBIfam" id="TIGR00138">
    <property type="entry name" value="rsmG_gidB"/>
    <property type="match status" value="1"/>
</dbReference>
<dbReference type="PANTHER" id="PTHR31760">
    <property type="entry name" value="S-ADENOSYL-L-METHIONINE-DEPENDENT METHYLTRANSFERASES SUPERFAMILY PROTEIN"/>
    <property type="match status" value="1"/>
</dbReference>
<dbReference type="PANTHER" id="PTHR31760:SF0">
    <property type="entry name" value="S-ADENOSYL-L-METHIONINE-DEPENDENT METHYLTRANSFERASES SUPERFAMILY PROTEIN"/>
    <property type="match status" value="1"/>
</dbReference>
<dbReference type="Pfam" id="PF02527">
    <property type="entry name" value="GidB"/>
    <property type="match status" value="1"/>
</dbReference>
<dbReference type="PIRSF" id="PIRSF003078">
    <property type="entry name" value="GidB"/>
    <property type="match status" value="1"/>
</dbReference>
<dbReference type="SUPFAM" id="SSF53335">
    <property type="entry name" value="S-adenosyl-L-methionine-dependent methyltransferases"/>
    <property type="match status" value="1"/>
</dbReference>
<reference key="1">
    <citation type="journal article" date="2007" name="J. Bacteriol.">
        <title>Genome sequence analysis of the emerging human pathogenic acetic acid bacterium Granulibacter bethesdensis.</title>
        <authorList>
            <person name="Greenberg D.E."/>
            <person name="Porcella S.F."/>
            <person name="Zelazny A.M."/>
            <person name="Virtaneva K."/>
            <person name="Sturdevant D.E."/>
            <person name="Kupko J.J. III"/>
            <person name="Barbian K.D."/>
            <person name="Babar A."/>
            <person name="Dorward D.W."/>
            <person name="Holland S.M."/>
        </authorList>
    </citation>
    <scope>NUCLEOTIDE SEQUENCE [LARGE SCALE GENOMIC DNA]</scope>
    <source>
        <strain>ATCC BAA-1260 / CGDNIH1</strain>
    </source>
</reference>